<keyword id="KW-0687">Ribonucleoprotein</keyword>
<keyword id="KW-0689">Ribosomal protein</keyword>
<reference key="1">
    <citation type="journal article" date="2009" name="PLoS Pathog.">
        <title>Genomic evidence for the evolution of Streptococcus equi: host restriction, increased virulence, and genetic exchange with human pathogens.</title>
        <authorList>
            <person name="Holden M.T.G."/>
            <person name="Heather Z."/>
            <person name="Paillot R."/>
            <person name="Steward K.F."/>
            <person name="Webb K."/>
            <person name="Ainslie F."/>
            <person name="Jourdan T."/>
            <person name="Bason N.C."/>
            <person name="Holroyd N.E."/>
            <person name="Mungall K."/>
            <person name="Quail M.A."/>
            <person name="Sanders M."/>
            <person name="Simmonds M."/>
            <person name="Willey D."/>
            <person name="Brooks K."/>
            <person name="Aanensen D.M."/>
            <person name="Spratt B.G."/>
            <person name="Jolley K.A."/>
            <person name="Maiden M.C.J."/>
            <person name="Kehoe M."/>
            <person name="Chanter N."/>
            <person name="Bentley S.D."/>
            <person name="Robinson C."/>
            <person name="Maskell D.J."/>
            <person name="Parkhill J."/>
            <person name="Waller A.S."/>
        </authorList>
    </citation>
    <scope>NUCLEOTIDE SEQUENCE [LARGE SCALE GENOMIC DNA]</scope>
    <source>
        <strain>H70</strain>
    </source>
</reference>
<protein>
    <recommendedName>
        <fullName evidence="1">Large ribosomal subunit protein bL35</fullName>
    </recommendedName>
    <alternativeName>
        <fullName evidence="3">50S ribosomal protein L35</fullName>
    </alternativeName>
</protein>
<name>RL35_STRS7</name>
<sequence>MPKQKTHRASAKRFKRTGSGGLKRFRAFTSHRFHGKTKKQRRHLRKAGMVHAGDFKRIKAMVTGL</sequence>
<comment type="similarity">
    <text evidence="1">Belongs to the bacterial ribosomal protein bL35 family.</text>
</comment>
<organism>
    <name type="scientific">Streptococcus equi subsp. zooepidemicus (strain H70)</name>
    <dbReference type="NCBI Taxonomy" id="553483"/>
    <lineage>
        <taxon>Bacteria</taxon>
        <taxon>Bacillati</taxon>
        <taxon>Bacillota</taxon>
        <taxon>Bacilli</taxon>
        <taxon>Lactobacillales</taxon>
        <taxon>Streptococcaceae</taxon>
        <taxon>Streptococcus</taxon>
    </lineage>
</organism>
<dbReference type="EMBL" id="FM204884">
    <property type="protein sequence ID" value="CAW99499.1"/>
    <property type="molecule type" value="Genomic_DNA"/>
</dbReference>
<dbReference type="SMR" id="C0MGL9"/>
<dbReference type="KEGG" id="seq:SZO_11030"/>
<dbReference type="eggNOG" id="COG0291">
    <property type="taxonomic scope" value="Bacteria"/>
</dbReference>
<dbReference type="HOGENOM" id="CLU_169643_3_1_9"/>
<dbReference type="Proteomes" id="UP000001368">
    <property type="component" value="Chromosome"/>
</dbReference>
<dbReference type="GO" id="GO:0022625">
    <property type="term" value="C:cytosolic large ribosomal subunit"/>
    <property type="evidence" value="ECO:0007669"/>
    <property type="project" value="TreeGrafter"/>
</dbReference>
<dbReference type="GO" id="GO:0003735">
    <property type="term" value="F:structural constituent of ribosome"/>
    <property type="evidence" value="ECO:0007669"/>
    <property type="project" value="InterPro"/>
</dbReference>
<dbReference type="GO" id="GO:0006412">
    <property type="term" value="P:translation"/>
    <property type="evidence" value="ECO:0007669"/>
    <property type="project" value="UniProtKB-UniRule"/>
</dbReference>
<dbReference type="FunFam" id="4.10.410.60:FF:000001">
    <property type="entry name" value="50S ribosomal protein L35"/>
    <property type="match status" value="1"/>
</dbReference>
<dbReference type="Gene3D" id="4.10.410.60">
    <property type="match status" value="1"/>
</dbReference>
<dbReference type="HAMAP" id="MF_00514">
    <property type="entry name" value="Ribosomal_bL35"/>
    <property type="match status" value="1"/>
</dbReference>
<dbReference type="InterPro" id="IPR001706">
    <property type="entry name" value="Ribosomal_bL35"/>
</dbReference>
<dbReference type="InterPro" id="IPR021137">
    <property type="entry name" value="Ribosomal_bL35-like"/>
</dbReference>
<dbReference type="InterPro" id="IPR018265">
    <property type="entry name" value="Ribosomal_bL35_CS"/>
</dbReference>
<dbReference type="InterPro" id="IPR037229">
    <property type="entry name" value="Ribosomal_bL35_sf"/>
</dbReference>
<dbReference type="NCBIfam" id="TIGR00001">
    <property type="entry name" value="rpmI_bact"/>
    <property type="match status" value="1"/>
</dbReference>
<dbReference type="PANTHER" id="PTHR33343">
    <property type="entry name" value="54S RIBOSOMAL PROTEIN BL35M"/>
    <property type="match status" value="1"/>
</dbReference>
<dbReference type="PANTHER" id="PTHR33343:SF1">
    <property type="entry name" value="LARGE RIBOSOMAL SUBUNIT PROTEIN BL35M"/>
    <property type="match status" value="1"/>
</dbReference>
<dbReference type="Pfam" id="PF01632">
    <property type="entry name" value="Ribosomal_L35p"/>
    <property type="match status" value="1"/>
</dbReference>
<dbReference type="PRINTS" id="PR00064">
    <property type="entry name" value="RIBOSOMALL35"/>
</dbReference>
<dbReference type="SUPFAM" id="SSF143034">
    <property type="entry name" value="L35p-like"/>
    <property type="match status" value="1"/>
</dbReference>
<dbReference type="PROSITE" id="PS00936">
    <property type="entry name" value="RIBOSOMAL_L35"/>
    <property type="match status" value="1"/>
</dbReference>
<feature type="chain" id="PRO_1000211714" description="Large ribosomal subunit protein bL35">
    <location>
        <begin position="1"/>
        <end position="65"/>
    </location>
</feature>
<feature type="region of interest" description="Disordered" evidence="2">
    <location>
        <begin position="1"/>
        <end position="20"/>
    </location>
</feature>
<feature type="compositionally biased region" description="Basic residues" evidence="2">
    <location>
        <begin position="1"/>
        <end position="16"/>
    </location>
</feature>
<accession>C0MGL9</accession>
<evidence type="ECO:0000255" key="1">
    <source>
        <dbReference type="HAMAP-Rule" id="MF_00514"/>
    </source>
</evidence>
<evidence type="ECO:0000256" key="2">
    <source>
        <dbReference type="SAM" id="MobiDB-lite"/>
    </source>
</evidence>
<evidence type="ECO:0000305" key="3"/>
<proteinExistence type="inferred from homology"/>
<gene>
    <name evidence="1" type="primary">rpmI</name>
    <name type="ordered locus">SZO_11030</name>
</gene>